<gene>
    <name type="primary">nifA</name>
    <name type="ordered locus">NGR_a01260</name>
    <name type="ORF">y4uN</name>
</gene>
<organism>
    <name type="scientific">Sinorhizobium fredii (strain NBRC 101917 / NGR234)</name>
    <dbReference type="NCBI Taxonomy" id="394"/>
    <lineage>
        <taxon>Bacteria</taxon>
        <taxon>Pseudomonadati</taxon>
        <taxon>Pseudomonadota</taxon>
        <taxon>Alphaproteobacteria</taxon>
        <taxon>Hyphomicrobiales</taxon>
        <taxon>Rhizobiaceae</taxon>
        <taxon>Sinorhizobium/Ensifer group</taxon>
        <taxon>Sinorhizobium</taxon>
    </lineage>
</organism>
<accession>Q53206</accession>
<feature type="chain" id="PRO_0000081314" description="Nif-specific regulatory protein">
    <location>
        <begin position="1"/>
        <end position="594"/>
    </location>
</feature>
<feature type="domain" description="GAF">
    <location>
        <begin position="69"/>
        <end position="210"/>
    </location>
</feature>
<feature type="domain" description="Sigma-54 factor interaction" evidence="3">
    <location>
        <begin position="252"/>
        <end position="480"/>
    </location>
</feature>
<feature type="DNA-binding region" description="H-T-H motif" evidence="1">
    <location>
        <begin position="566"/>
        <end position="585"/>
    </location>
</feature>
<feature type="region of interest" description="Disordered" evidence="4">
    <location>
        <begin position="213"/>
        <end position="243"/>
    </location>
</feature>
<feature type="region of interest" description="Inter-domain linker">
    <location>
        <begin position="481"/>
        <end position="551"/>
    </location>
</feature>
<feature type="region of interest" description="C-terminal DNA-binding domain">
    <location>
        <begin position="552"/>
        <end position="594"/>
    </location>
</feature>
<feature type="binding site" evidence="3">
    <location>
        <begin position="280"/>
        <end position="287"/>
    </location>
    <ligand>
        <name>ATP</name>
        <dbReference type="ChEBI" id="CHEBI:30616"/>
    </ligand>
</feature>
<feature type="binding site" evidence="3">
    <location>
        <begin position="343"/>
        <end position="352"/>
    </location>
    <ligand>
        <name>ATP</name>
        <dbReference type="ChEBI" id="CHEBI:30616"/>
    </ligand>
</feature>
<feature type="binding site" evidence="2">
    <location>
        <position position="494"/>
    </location>
    <ligand>
        <name>a divalent metal cation</name>
        <dbReference type="ChEBI" id="CHEBI:60240"/>
    </ligand>
</feature>
<feature type="binding site" evidence="2">
    <location>
        <position position="499"/>
    </location>
    <ligand>
        <name>a divalent metal cation</name>
        <dbReference type="ChEBI" id="CHEBI:60240"/>
    </ligand>
</feature>
<geneLocation type="plasmid">
    <name>sym pNGR234a</name>
</geneLocation>
<reference key="1">
    <citation type="journal article" date="1996" name="Genome Res.">
        <title>Sequencing the 500-kb GC-rich symbiotic replicon of Rhizobium sp. NGR234 using dye terminators and a thermostable 'sequenase': a beginning.</title>
        <authorList>
            <person name="Freiberg C."/>
            <person name="Perret X."/>
            <person name="Broughton W.J."/>
            <person name="Rosenthal A."/>
        </authorList>
    </citation>
    <scope>NUCLEOTIDE SEQUENCE [GENOMIC DNA]</scope>
</reference>
<reference key="2">
    <citation type="journal article" date="1997" name="Nature">
        <title>Molecular basis of symbiosis between Rhizobium and legumes.</title>
        <authorList>
            <person name="Freiberg C.A."/>
            <person name="Fellay R."/>
            <person name="Bairoch A."/>
            <person name="Broughton W.J."/>
            <person name="Rosenthal A."/>
            <person name="Perret X."/>
        </authorList>
    </citation>
    <scope>NUCLEOTIDE SEQUENCE [LARGE SCALE GENOMIC DNA]</scope>
    <source>
        <strain>NBRC 101917 / NGR234</strain>
    </source>
</reference>
<reference key="3">
    <citation type="journal article" date="2009" name="Appl. Environ. Microbiol.">
        <title>Rhizobium sp. strain NGR234 possesses a remarkable number of secretion systems.</title>
        <authorList>
            <person name="Schmeisser C."/>
            <person name="Liesegang H."/>
            <person name="Krysciak D."/>
            <person name="Bakkou N."/>
            <person name="Le Quere A."/>
            <person name="Wollherr A."/>
            <person name="Heinemeyer I."/>
            <person name="Morgenstern B."/>
            <person name="Pommerening-Roeser A."/>
            <person name="Flores M."/>
            <person name="Palacios R."/>
            <person name="Brenner S."/>
            <person name="Gottschalk G."/>
            <person name="Schmitz R.A."/>
            <person name="Broughton W.J."/>
            <person name="Perret X."/>
            <person name="Strittmatter A.W."/>
            <person name="Streit W.R."/>
        </authorList>
    </citation>
    <scope>NUCLEOTIDE SEQUENCE [LARGE SCALE GENOMIC DNA]</scope>
    <source>
        <strain>NBRC 101917 / NGR234</strain>
    </source>
</reference>
<dbReference type="EMBL" id="Z68203">
    <property type="protein sequence ID" value="CAA92413.1"/>
    <property type="status" value="ALT_INIT"/>
    <property type="molecule type" value="Genomic_DNA"/>
</dbReference>
<dbReference type="EMBL" id="U00090">
    <property type="protein sequence ID" value="AAB91886.1"/>
    <property type="molecule type" value="Genomic_DNA"/>
</dbReference>
<dbReference type="RefSeq" id="NP_444099.1">
    <property type="nucleotide sequence ID" value="NC_000914.2"/>
</dbReference>
<dbReference type="SMR" id="Q53206"/>
<dbReference type="KEGG" id="rhi:NGR_a01260"/>
<dbReference type="PATRIC" id="fig|394.7.peg.110"/>
<dbReference type="eggNOG" id="COG3604">
    <property type="taxonomic scope" value="Bacteria"/>
</dbReference>
<dbReference type="HOGENOM" id="CLU_000445_95_2_5"/>
<dbReference type="OrthoDB" id="9761019at2"/>
<dbReference type="Proteomes" id="UP000001054">
    <property type="component" value="Plasmid pNGR234a"/>
</dbReference>
<dbReference type="GO" id="GO:0005524">
    <property type="term" value="F:ATP binding"/>
    <property type="evidence" value="ECO:0007669"/>
    <property type="project" value="UniProtKB-KW"/>
</dbReference>
<dbReference type="GO" id="GO:0016887">
    <property type="term" value="F:ATP hydrolysis activity"/>
    <property type="evidence" value="ECO:0007669"/>
    <property type="project" value="InterPro"/>
</dbReference>
<dbReference type="GO" id="GO:0003700">
    <property type="term" value="F:DNA-binding transcription factor activity"/>
    <property type="evidence" value="ECO:0007669"/>
    <property type="project" value="InterPro"/>
</dbReference>
<dbReference type="GO" id="GO:0046872">
    <property type="term" value="F:metal ion binding"/>
    <property type="evidence" value="ECO:0007669"/>
    <property type="project" value="UniProtKB-KW"/>
</dbReference>
<dbReference type="GO" id="GO:0043565">
    <property type="term" value="F:sequence-specific DNA binding"/>
    <property type="evidence" value="ECO:0007669"/>
    <property type="project" value="InterPro"/>
</dbReference>
<dbReference type="GO" id="GO:0009399">
    <property type="term" value="P:nitrogen fixation"/>
    <property type="evidence" value="ECO:0007669"/>
    <property type="project" value="UniProtKB-KW"/>
</dbReference>
<dbReference type="GO" id="GO:0000160">
    <property type="term" value="P:phosphorelay signal transduction system"/>
    <property type="evidence" value="ECO:0007669"/>
    <property type="project" value="UniProtKB-KW"/>
</dbReference>
<dbReference type="CDD" id="cd00009">
    <property type="entry name" value="AAA"/>
    <property type="match status" value="1"/>
</dbReference>
<dbReference type="FunFam" id="3.40.50.300:FF:000006">
    <property type="entry name" value="DNA-binding transcriptional regulator NtrC"/>
    <property type="match status" value="1"/>
</dbReference>
<dbReference type="Gene3D" id="1.10.8.60">
    <property type="match status" value="1"/>
</dbReference>
<dbReference type="Gene3D" id="3.30.450.40">
    <property type="match status" value="1"/>
</dbReference>
<dbReference type="Gene3D" id="1.10.10.60">
    <property type="entry name" value="Homeodomain-like"/>
    <property type="match status" value="1"/>
</dbReference>
<dbReference type="Gene3D" id="3.40.50.300">
    <property type="entry name" value="P-loop containing nucleotide triphosphate hydrolases"/>
    <property type="match status" value="1"/>
</dbReference>
<dbReference type="InterPro" id="IPR003593">
    <property type="entry name" value="AAA+_ATPase"/>
</dbReference>
<dbReference type="InterPro" id="IPR003018">
    <property type="entry name" value="GAF"/>
</dbReference>
<dbReference type="InterPro" id="IPR029016">
    <property type="entry name" value="GAF-like_dom_sf"/>
</dbReference>
<dbReference type="InterPro" id="IPR002197">
    <property type="entry name" value="HTH_Fis"/>
</dbReference>
<dbReference type="InterPro" id="IPR010113">
    <property type="entry name" value="Nif-specific_regulatory_prot"/>
</dbReference>
<dbReference type="InterPro" id="IPR027417">
    <property type="entry name" value="P-loop_NTPase"/>
</dbReference>
<dbReference type="InterPro" id="IPR002078">
    <property type="entry name" value="Sigma_54_int"/>
</dbReference>
<dbReference type="InterPro" id="IPR025662">
    <property type="entry name" value="Sigma_54_int_dom_ATP-bd_1"/>
</dbReference>
<dbReference type="InterPro" id="IPR025943">
    <property type="entry name" value="Sigma_54_int_dom_ATP-bd_2"/>
</dbReference>
<dbReference type="InterPro" id="IPR025944">
    <property type="entry name" value="Sigma_54_int_dom_CS"/>
</dbReference>
<dbReference type="NCBIfam" id="TIGR01817">
    <property type="entry name" value="nifA"/>
    <property type="match status" value="1"/>
</dbReference>
<dbReference type="PANTHER" id="PTHR32071:SF117">
    <property type="entry name" value="PTS-DEPENDENT DIHYDROXYACETONE KINASE OPERON REGULATORY PROTEIN-RELATED"/>
    <property type="match status" value="1"/>
</dbReference>
<dbReference type="PANTHER" id="PTHR32071">
    <property type="entry name" value="TRANSCRIPTIONAL REGULATORY PROTEIN"/>
    <property type="match status" value="1"/>
</dbReference>
<dbReference type="Pfam" id="PF01590">
    <property type="entry name" value="GAF"/>
    <property type="match status" value="1"/>
</dbReference>
<dbReference type="Pfam" id="PF02954">
    <property type="entry name" value="HTH_8"/>
    <property type="match status" value="1"/>
</dbReference>
<dbReference type="Pfam" id="PF00158">
    <property type="entry name" value="Sigma54_activat"/>
    <property type="match status" value="1"/>
</dbReference>
<dbReference type="PRINTS" id="PR01590">
    <property type="entry name" value="HTHFIS"/>
</dbReference>
<dbReference type="SMART" id="SM00382">
    <property type="entry name" value="AAA"/>
    <property type="match status" value="1"/>
</dbReference>
<dbReference type="SMART" id="SM00065">
    <property type="entry name" value="GAF"/>
    <property type="match status" value="1"/>
</dbReference>
<dbReference type="SUPFAM" id="SSF55781">
    <property type="entry name" value="GAF domain-like"/>
    <property type="match status" value="1"/>
</dbReference>
<dbReference type="SUPFAM" id="SSF52540">
    <property type="entry name" value="P-loop containing nucleoside triphosphate hydrolases"/>
    <property type="match status" value="1"/>
</dbReference>
<dbReference type="PROSITE" id="PS00675">
    <property type="entry name" value="SIGMA54_INTERACT_1"/>
    <property type="match status" value="1"/>
</dbReference>
<dbReference type="PROSITE" id="PS00676">
    <property type="entry name" value="SIGMA54_INTERACT_2"/>
    <property type="match status" value="1"/>
</dbReference>
<dbReference type="PROSITE" id="PS00688">
    <property type="entry name" value="SIGMA54_INTERACT_3"/>
    <property type="match status" value="1"/>
</dbReference>
<dbReference type="PROSITE" id="PS50045">
    <property type="entry name" value="SIGMA54_INTERACT_4"/>
    <property type="match status" value="1"/>
</dbReference>
<comment type="function">
    <text>Required for activation of most nif operons, which are directly involved in nitrogen fixation.</text>
</comment>
<comment type="subunit">
    <text>Interacts with sigma-54.</text>
</comment>
<comment type="sequence caution" evidence="5">
    <conflict type="erroneous initiation">
        <sequence resource="EMBL-CDS" id="CAA92413"/>
    </conflict>
</comment>
<protein>
    <recommendedName>
        <fullName>Nif-specific regulatory protein</fullName>
    </recommendedName>
</protein>
<proteinExistence type="predicted"/>
<keyword id="KW-0010">Activator</keyword>
<keyword id="KW-0067">ATP-binding</keyword>
<keyword id="KW-0238">DNA-binding</keyword>
<keyword id="KW-0479">Metal-binding</keyword>
<keyword id="KW-0535">Nitrogen fixation</keyword>
<keyword id="KW-0547">Nucleotide-binding</keyword>
<keyword id="KW-0614">Plasmid</keyword>
<keyword id="KW-1185">Reference proteome</keyword>
<keyword id="KW-0804">Transcription</keyword>
<keyword id="KW-0805">Transcription regulation</keyword>
<keyword id="KW-0902">Two-component regulatory system</keyword>
<evidence type="ECO:0000250" key="1"/>
<evidence type="ECO:0000250" key="2">
    <source>
        <dbReference type="UniProtKB" id="P05407"/>
    </source>
</evidence>
<evidence type="ECO:0000255" key="3">
    <source>
        <dbReference type="PROSITE-ProRule" id="PRU00193"/>
    </source>
</evidence>
<evidence type="ECO:0000256" key="4">
    <source>
        <dbReference type="SAM" id="MobiDB-lite"/>
    </source>
</evidence>
<evidence type="ECO:0000305" key="5"/>
<name>NIFA_SINFN</name>
<sequence length="594" mass="64886">MQAQALDNVSKAAFSRREPRAVRTTLKVFPRKNWLDECMTELSPKTMHKRDLGCSGLYRISKVLITSASLEIKLANVINTLPALLPMRRGAIVVVGAEGEPETTATFGVEPPSSGARHIAAKAAIDRIVAKGAPLVVPDTCKSELFQDELQSIVSGTGQVTFIGVPMKADQETLGTLWIDRAKDGAATRTQFEEEVRFLSMVANLAARAVRLNGHESRDSRPIGEEGDRKISGGDKELPEPTRQRPTRIDWIVGESPALRQVVESVKVVAQTNSAVLLRGESGTGKEFFAKAIHELSPRRKKPFVKLNCAALSAGVLESELFGHEKGAFTGAISQRAGRFELADGGTLLLDEIGEISPAFQAKLLRVLQEGELERVGGTKTLKVDVRLICATNKDLETAVAEGEFRADLYYRINVVPLFLPPLRERNGDIPRLAKVFLDRFNRENNRNLEFTPAALEILSRCKFPGNVRELENCVRRTATLARSATIVPSDFSCQNDQCFSSMLGKTADRPLGSHSLNGLAMSKRLPVESPASLGYPAGPGGLTVAPHLSDRELLISAMEKAGWVQAKAARILGLTPRQVGYALRRHHIQVKKI</sequence>